<protein>
    <recommendedName>
        <fullName evidence="1">UPF0145 protein Pput_2816</fullName>
    </recommendedName>
</protein>
<feature type="chain" id="PRO_1000059731" description="UPF0145 protein Pput_2816">
    <location>
        <begin position="1"/>
        <end position="106"/>
    </location>
</feature>
<sequence>MIISTTSQLEGRPIAEYLGVVSSESVQGINFVRDFFTRFRDFFGGRSQTLESALREAREQATEELKARARQLQADAVVGVDFEISMPSVQGGMVVVFATGTAVRLK</sequence>
<comment type="similarity">
    <text evidence="1">Belongs to the UPF0145 family.</text>
</comment>
<name>Y2816_PSEP1</name>
<reference key="1">
    <citation type="submission" date="2007-05" db="EMBL/GenBank/DDBJ databases">
        <title>Complete sequence of Pseudomonas putida F1.</title>
        <authorList>
            <consortium name="US DOE Joint Genome Institute"/>
            <person name="Copeland A."/>
            <person name="Lucas S."/>
            <person name="Lapidus A."/>
            <person name="Barry K."/>
            <person name="Detter J.C."/>
            <person name="Glavina del Rio T."/>
            <person name="Hammon N."/>
            <person name="Israni S."/>
            <person name="Dalin E."/>
            <person name="Tice H."/>
            <person name="Pitluck S."/>
            <person name="Chain P."/>
            <person name="Malfatti S."/>
            <person name="Shin M."/>
            <person name="Vergez L."/>
            <person name="Schmutz J."/>
            <person name="Larimer F."/>
            <person name="Land M."/>
            <person name="Hauser L."/>
            <person name="Kyrpides N."/>
            <person name="Lykidis A."/>
            <person name="Parales R."/>
            <person name="Richardson P."/>
        </authorList>
    </citation>
    <scope>NUCLEOTIDE SEQUENCE [LARGE SCALE GENOMIC DNA]</scope>
    <source>
        <strain>ATCC 700007 / DSM 6899 / JCM 31910 / BCRC 17059 / LMG 24140 / F1</strain>
    </source>
</reference>
<organism>
    <name type="scientific">Pseudomonas putida (strain ATCC 700007 / DSM 6899 / JCM 31910 / BCRC 17059 / LMG 24140 / F1)</name>
    <dbReference type="NCBI Taxonomy" id="351746"/>
    <lineage>
        <taxon>Bacteria</taxon>
        <taxon>Pseudomonadati</taxon>
        <taxon>Pseudomonadota</taxon>
        <taxon>Gammaproteobacteria</taxon>
        <taxon>Pseudomonadales</taxon>
        <taxon>Pseudomonadaceae</taxon>
        <taxon>Pseudomonas</taxon>
    </lineage>
</organism>
<gene>
    <name type="ordered locus">Pput_2816</name>
</gene>
<dbReference type="EMBL" id="CP000712">
    <property type="protein sequence ID" value="ABQ78948.1"/>
    <property type="molecule type" value="Genomic_DNA"/>
</dbReference>
<dbReference type="SMR" id="A5W488"/>
<dbReference type="KEGG" id="ppf:Pput_2816"/>
<dbReference type="eggNOG" id="COG0393">
    <property type="taxonomic scope" value="Bacteria"/>
</dbReference>
<dbReference type="HOGENOM" id="CLU_117144_3_2_6"/>
<dbReference type="Gene3D" id="3.30.110.70">
    <property type="entry name" value="Hypothetical protein apc22750. Chain B"/>
    <property type="match status" value="1"/>
</dbReference>
<dbReference type="HAMAP" id="MF_00338">
    <property type="entry name" value="UPF0145"/>
    <property type="match status" value="1"/>
</dbReference>
<dbReference type="InterPro" id="IPR035439">
    <property type="entry name" value="UPF0145_dom_sf"/>
</dbReference>
<dbReference type="InterPro" id="IPR002765">
    <property type="entry name" value="UPF0145_YbjQ-like"/>
</dbReference>
<dbReference type="PANTHER" id="PTHR34068">
    <property type="entry name" value="UPF0145 PROTEIN YBJQ"/>
    <property type="match status" value="1"/>
</dbReference>
<dbReference type="PANTHER" id="PTHR34068:SF1">
    <property type="entry name" value="UPF0145 PROTEIN YBJQ"/>
    <property type="match status" value="1"/>
</dbReference>
<dbReference type="Pfam" id="PF01906">
    <property type="entry name" value="YbjQ_1"/>
    <property type="match status" value="1"/>
</dbReference>
<dbReference type="SUPFAM" id="SSF117782">
    <property type="entry name" value="YbjQ-like"/>
    <property type="match status" value="1"/>
</dbReference>
<accession>A5W488</accession>
<evidence type="ECO:0000255" key="1">
    <source>
        <dbReference type="HAMAP-Rule" id="MF_00338"/>
    </source>
</evidence>
<proteinExistence type="inferred from homology"/>